<reference key="1">
    <citation type="journal article" date="2000" name="Dev. Biol.">
        <title>Isolation and characterization of the novel popeye gene family expressed in skeletal muscle and heart.</title>
        <authorList>
            <person name="Andree B."/>
            <person name="Hillemann T."/>
            <person name="Kessler-Icekson G."/>
            <person name="Schmitt-John T."/>
            <person name="Jockusch H."/>
            <person name="Arnold H.-H."/>
            <person name="Brand T."/>
        </authorList>
    </citation>
    <scope>NUCLEOTIDE SEQUENCE [MRNA]</scope>
    <scope>POSSIBLE FUNCTION</scope>
    <scope>TISSUE SPECIFICITY</scope>
</reference>
<reference key="2">
    <citation type="journal article" date="2004" name="Nat. Genet.">
        <title>Complete sequencing and characterization of 21,243 full-length human cDNAs.</title>
        <authorList>
            <person name="Ota T."/>
            <person name="Suzuki Y."/>
            <person name="Nishikawa T."/>
            <person name="Otsuki T."/>
            <person name="Sugiyama T."/>
            <person name="Irie R."/>
            <person name="Wakamatsu A."/>
            <person name="Hayashi K."/>
            <person name="Sato H."/>
            <person name="Nagai K."/>
            <person name="Kimura K."/>
            <person name="Makita H."/>
            <person name="Sekine M."/>
            <person name="Obayashi M."/>
            <person name="Nishi T."/>
            <person name="Shibahara T."/>
            <person name="Tanaka T."/>
            <person name="Ishii S."/>
            <person name="Yamamoto J."/>
            <person name="Saito K."/>
            <person name="Kawai Y."/>
            <person name="Isono Y."/>
            <person name="Nakamura Y."/>
            <person name="Nagahari K."/>
            <person name="Murakami K."/>
            <person name="Yasuda T."/>
            <person name="Iwayanagi T."/>
            <person name="Wagatsuma M."/>
            <person name="Shiratori A."/>
            <person name="Sudo H."/>
            <person name="Hosoiri T."/>
            <person name="Kaku Y."/>
            <person name="Kodaira H."/>
            <person name="Kondo H."/>
            <person name="Sugawara M."/>
            <person name="Takahashi M."/>
            <person name="Kanda K."/>
            <person name="Yokoi T."/>
            <person name="Furuya T."/>
            <person name="Kikkawa E."/>
            <person name="Omura Y."/>
            <person name="Abe K."/>
            <person name="Kamihara K."/>
            <person name="Katsuta N."/>
            <person name="Sato K."/>
            <person name="Tanikawa M."/>
            <person name="Yamazaki M."/>
            <person name="Ninomiya K."/>
            <person name="Ishibashi T."/>
            <person name="Yamashita H."/>
            <person name="Murakawa K."/>
            <person name="Fujimori K."/>
            <person name="Tanai H."/>
            <person name="Kimata M."/>
            <person name="Watanabe M."/>
            <person name="Hiraoka S."/>
            <person name="Chiba Y."/>
            <person name="Ishida S."/>
            <person name="Ono Y."/>
            <person name="Takiguchi S."/>
            <person name="Watanabe S."/>
            <person name="Yosida M."/>
            <person name="Hotuta T."/>
            <person name="Kusano J."/>
            <person name="Kanehori K."/>
            <person name="Takahashi-Fujii A."/>
            <person name="Hara H."/>
            <person name="Tanase T.-O."/>
            <person name="Nomura Y."/>
            <person name="Togiya S."/>
            <person name="Komai F."/>
            <person name="Hara R."/>
            <person name="Takeuchi K."/>
            <person name="Arita M."/>
            <person name="Imose N."/>
            <person name="Musashino K."/>
            <person name="Yuuki H."/>
            <person name="Oshima A."/>
            <person name="Sasaki N."/>
            <person name="Aotsuka S."/>
            <person name="Yoshikawa Y."/>
            <person name="Matsunawa H."/>
            <person name="Ichihara T."/>
            <person name="Shiohata N."/>
            <person name="Sano S."/>
            <person name="Moriya S."/>
            <person name="Momiyama H."/>
            <person name="Satoh N."/>
            <person name="Takami S."/>
            <person name="Terashima Y."/>
            <person name="Suzuki O."/>
            <person name="Nakagawa S."/>
            <person name="Senoh A."/>
            <person name="Mizoguchi H."/>
            <person name="Goto Y."/>
            <person name="Shimizu F."/>
            <person name="Wakebe H."/>
            <person name="Hishigaki H."/>
            <person name="Watanabe T."/>
            <person name="Sugiyama A."/>
            <person name="Takemoto M."/>
            <person name="Kawakami B."/>
            <person name="Yamazaki M."/>
            <person name="Watanabe K."/>
            <person name="Kumagai A."/>
            <person name="Itakura S."/>
            <person name="Fukuzumi Y."/>
            <person name="Fujimori Y."/>
            <person name="Komiyama M."/>
            <person name="Tashiro H."/>
            <person name="Tanigami A."/>
            <person name="Fujiwara T."/>
            <person name="Ono T."/>
            <person name="Yamada K."/>
            <person name="Fujii Y."/>
            <person name="Ozaki K."/>
            <person name="Hirao M."/>
            <person name="Ohmori Y."/>
            <person name="Kawabata A."/>
            <person name="Hikiji T."/>
            <person name="Kobatake N."/>
            <person name="Inagaki H."/>
            <person name="Ikema Y."/>
            <person name="Okamoto S."/>
            <person name="Okitani R."/>
            <person name="Kawakami T."/>
            <person name="Noguchi S."/>
            <person name="Itoh T."/>
            <person name="Shigeta K."/>
            <person name="Senba T."/>
            <person name="Matsumura K."/>
            <person name="Nakajima Y."/>
            <person name="Mizuno T."/>
            <person name="Morinaga M."/>
            <person name="Sasaki M."/>
            <person name="Togashi T."/>
            <person name="Oyama M."/>
            <person name="Hata H."/>
            <person name="Watanabe M."/>
            <person name="Komatsu T."/>
            <person name="Mizushima-Sugano J."/>
            <person name="Satoh T."/>
            <person name="Shirai Y."/>
            <person name="Takahashi Y."/>
            <person name="Nakagawa K."/>
            <person name="Okumura K."/>
            <person name="Nagase T."/>
            <person name="Nomura N."/>
            <person name="Kikuchi H."/>
            <person name="Masuho Y."/>
            <person name="Yamashita R."/>
            <person name="Nakai K."/>
            <person name="Yada T."/>
            <person name="Nakamura Y."/>
            <person name="Ohara O."/>
            <person name="Isogai T."/>
            <person name="Sugano S."/>
        </authorList>
    </citation>
    <scope>NUCLEOTIDE SEQUENCE [LARGE SCALE MRNA]</scope>
    <source>
        <tissue>Cerebellum</tissue>
    </source>
</reference>
<reference key="3">
    <citation type="journal article" date="2003" name="Nature">
        <title>The DNA sequence and analysis of human chromosome 6.</title>
        <authorList>
            <person name="Mungall A.J."/>
            <person name="Palmer S.A."/>
            <person name="Sims S.K."/>
            <person name="Edwards C.A."/>
            <person name="Ashurst J.L."/>
            <person name="Wilming L."/>
            <person name="Jones M.C."/>
            <person name="Horton R."/>
            <person name="Hunt S.E."/>
            <person name="Scott C.E."/>
            <person name="Gilbert J.G.R."/>
            <person name="Clamp M.E."/>
            <person name="Bethel G."/>
            <person name="Milne S."/>
            <person name="Ainscough R."/>
            <person name="Almeida J.P."/>
            <person name="Ambrose K.D."/>
            <person name="Andrews T.D."/>
            <person name="Ashwell R.I.S."/>
            <person name="Babbage A.K."/>
            <person name="Bagguley C.L."/>
            <person name="Bailey J."/>
            <person name="Banerjee R."/>
            <person name="Barker D.J."/>
            <person name="Barlow K.F."/>
            <person name="Bates K."/>
            <person name="Beare D.M."/>
            <person name="Beasley H."/>
            <person name="Beasley O."/>
            <person name="Bird C.P."/>
            <person name="Blakey S.E."/>
            <person name="Bray-Allen S."/>
            <person name="Brook J."/>
            <person name="Brown A.J."/>
            <person name="Brown J.Y."/>
            <person name="Burford D.C."/>
            <person name="Burrill W."/>
            <person name="Burton J."/>
            <person name="Carder C."/>
            <person name="Carter N.P."/>
            <person name="Chapman J.C."/>
            <person name="Clark S.Y."/>
            <person name="Clark G."/>
            <person name="Clee C.M."/>
            <person name="Clegg S."/>
            <person name="Cobley V."/>
            <person name="Collier R.E."/>
            <person name="Collins J.E."/>
            <person name="Colman L.K."/>
            <person name="Corby N.R."/>
            <person name="Coville G.J."/>
            <person name="Culley K.M."/>
            <person name="Dhami P."/>
            <person name="Davies J."/>
            <person name="Dunn M."/>
            <person name="Earthrowl M.E."/>
            <person name="Ellington A.E."/>
            <person name="Evans K.A."/>
            <person name="Faulkner L."/>
            <person name="Francis M.D."/>
            <person name="Frankish A."/>
            <person name="Frankland J."/>
            <person name="French L."/>
            <person name="Garner P."/>
            <person name="Garnett J."/>
            <person name="Ghori M.J."/>
            <person name="Gilby L.M."/>
            <person name="Gillson C.J."/>
            <person name="Glithero R.J."/>
            <person name="Grafham D.V."/>
            <person name="Grant M."/>
            <person name="Gribble S."/>
            <person name="Griffiths C."/>
            <person name="Griffiths M.N.D."/>
            <person name="Hall R."/>
            <person name="Halls K.S."/>
            <person name="Hammond S."/>
            <person name="Harley J.L."/>
            <person name="Hart E.A."/>
            <person name="Heath P.D."/>
            <person name="Heathcott R."/>
            <person name="Holmes S.J."/>
            <person name="Howden P.J."/>
            <person name="Howe K.L."/>
            <person name="Howell G.R."/>
            <person name="Huckle E."/>
            <person name="Humphray S.J."/>
            <person name="Humphries M.D."/>
            <person name="Hunt A.R."/>
            <person name="Johnson C.M."/>
            <person name="Joy A.A."/>
            <person name="Kay M."/>
            <person name="Keenan S.J."/>
            <person name="Kimberley A.M."/>
            <person name="King A."/>
            <person name="Laird G.K."/>
            <person name="Langford C."/>
            <person name="Lawlor S."/>
            <person name="Leongamornlert D.A."/>
            <person name="Leversha M."/>
            <person name="Lloyd C.R."/>
            <person name="Lloyd D.M."/>
            <person name="Loveland J.E."/>
            <person name="Lovell J."/>
            <person name="Martin S."/>
            <person name="Mashreghi-Mohammadi M."/>
            <person name="Maslen G.L."/>
            <person name="Matthews L."/>
            <person name="McCann O.T."/>
            <person name="McLaren S.J."/>
            <person name="McLay K."/>
            <person name="McMurray A."/>
            <person name="Moore M.J.F."/>
            <person name="Mullikin J.C."/>
            <person name="Niblett D."/>
            <person name="Nickerson T."/>
            <person name="Novik K.L."/>
            <person name="Oliver K."/>
            <person name="Overton-Larty E.K."/>
            <person name="Parker A."/>
            <person name="Patel R."/>
            <person name="Pearce A.V."/>
            <person name="Peck A.I."/>
            <person name="Phillimore B.J.C.T."/>
            <person name="Phillips S."/>
            <person name="Plumb R.W."/>
            <person name="Porter K.M."/>
            <person name="Ramsey Y."/>
            <person name="Ranby S.A."/>
            <person name="Rice C.M."/>
            <person name="Ross M.T."/>
            <person name="Searle S.M."/>
            <person name="Sehra H.K."/>
            <person name="Sheridan E."/>
            <person name="Skuce C.D."/>
            <person name="Smith S."/>
            <person name="Smith M."/>
            <person name="Spraggon L."/>
            <person name="Squares S.L."/>
            <person name="Steward C.A."/>
            <person name="Sycamore N."/>
            <person name="Tamlyn-Hall G."/>
            <person name="Tester J."/>
            <person name="Theaker A.J."/>
            <person name="Thomas D.W."/>
            <person name="Thorpe A."/>
            <person name="Tracey A."/>
            <person name="Tromans A."/>
            <person name="Tubby B."/>
            <person name="Wall M."/>
            <person name="Wallis J.M."/>
            <person name="West A.P."/>
            <person name="White S.S."/>
            <person name="Whitehead S.L."/>
            <person name="Whittaker H."/>
            <person name="Wild A."/>
            <person name="Willey D.J."/>
            <person name="Wilmer T.E."/>
            <person name="Wood J.M."/>
            <person name="Wray P.W."/>
            <person name="Wyatt J.C."/>
            <person name="Young L."/>
            <person name="Younger R.M."/>
            <person name="Bentley D.R."/>
            <person name="Coulson A."/>
            <person name="Durbin R.M."/>
            <person name="Hubbard T."/>
            <person name="Sulston J.E."/>
            <person name="Dunham I."/>
            <person name="Rogers J."/>
            <person name="Beck S."/>
        </authorList>
    </citation>
    <scope>NUCLEOTIDE SEQUENCE [LARGE SCALE GENOMIC DNA]</scope>
</reference>
<reference key="4">
    <citation type="submission" date="2005-09" db="EMBL/GenBank/DDBJ databases">
        <authorList>
            <person name="Mural R.J."/>
            <person name="Istrail S."/>
            <person name="Sutton G.G."/>
            <person name="Florea L."/>
            <person name="Halpern A.L."/>
            <person name="Mobarry C.M."/>
            <person name="Lippert R."/>
            <person name="Walenz B."/>
            <person name="Shatkay H."/>
            <person name="Dew I."/>
            <person name="Miller J.R."/>
            <person name="Flanigan M.J."/>
            <person name="Edwards N.J."/>
            <person name="Bolanos R."/>
            <person name="Fasulo D."/>
            <person name="Halldorsson B.V."/>
            <person name="Hannenhalli S."/>
            <person name="Turner R."/>
            <person name="Yooseph S."/>
            <person name="Lu F."/>
            <person name="Nusskern D.R."/>
            <person name="Shue B.C."/>
            <person name="Zheng X.H."/>
            <person name="Zhong F."/>
            <person name="Delcher A.L."/>
            <person name="Huson D.H."/>
            <person name="Kravitz S.A."/>
            <person name="Mouchard L."/>
            <person name="Reinert K."/>
            <person name="Remington K.A."/>
            <person name="Clark A.G."/>
            <person name="Waterman M.S."/>
            <person name="Eichler E.E."/>
            <person name="Adams M.D."/>
            <person name="Hunkapiller M.W."/>
            <person name="Myers E.W."/>
            <person name="Venter J.C."/>
        </authorList>
    </citation>
    <scope>NUCLEOTIDE SEQUENCE [LARGE SCALE GENOMIC DNA]</scope>
</reference>
<reference key="5">
    <citation type="journal article" date="2004" name="Genome Res.">
        <title>The status, quality, and expansion of the NIH full-length cDNA project: the Mammalian Gene Collection (MGC).</title>
        <authorList>
            <consortium name="The MGC Project Team"/>
        </authorList>
    </citation>
    <scope>NUCLEOTIDE SEQUENCE [LARGE SCALE MRNA]</scope>
    <source>
        <tissue>Skeletal muscle</tissue>
    </source>
</reference>
<reference key="6">
    <citation type="journal article" date="2019" name="Ann. Neurol.">
        <title>POPDC3 Gene Variants Associate with a New Form of Limb Girdle Muscular Dystrophy.</title>
        <authorList>
            <person name="Vissing J."/>
            <person name="Johnson K."/>
            <person name="Toepf A."/>
            <person name="Nafissi S."/>
            <person name="Diaz-Manera J."/>
            <person name="French V.M."/>
            <person name="Schindler R.F."/>
            <person name="Sarathchandra P."/>
            <person name="Loekken N."/>
            <person name="Rinne S."/>
            <person name="Freund M."/>
            <person name="Decher N."/>
            <person name="Mueller T."/>
            <person name="Duno M."/>
            <person name="Krag T."/>
            <person name="Brand T."/>
            <person name="Straub V."/>
        </authorList>
    </citation>
    <scope>INVOLVEMENT IN LGMDR26</scope>
    <scope>VARIANTS LGMDR26 HIS-155; PHE-217 AND GLN-261</scope>
    <scope>CHARACTERIZATION OF VARIANTS LGMDR26 HIS-155; PHE-217 AND GLN-261</scope>
    <scope>FUNCTION</scope>
    <scope>TISSUE SPECIFICITY</scope>
</reference>
<organism>
    <name type="scientific">Homo sapiens</name>
    <name type="common">Human</name>
    <dbReference type="NCBI Taxonomy" id="9606"/>
    <lineage>
        <taxon>Eukaryota</taxon>
        <taxon>Metazoa</taxon>
        <taxon>Chordata</taxon>
        <taxon>Craniata</taxon>
        <taxon>Vertebrata</taxon>
        <taxon>Euteleostomi</taxon>
        <taxon>Mammalia</taxon>
        <taxon>Eutheria</taxon>
        <taxon>Euarchontoglires</taxon>
        <taxon>Primates</taxon>
        <taxon>Haplorrhini</taxon>
        <taxon>Catarrhini</taxon>
        <taxon>Hominidae</taxon>
        <taxon>Homo</taxon>
    </lineage>
</organism>
<proteinExistence type="evidence at protein level"/>
<keyword id="KW-0114">cAMP</keyword>
<keyword id="KW-0116">cAMP-binding</keyword>
<keyword id="KW-0325">Glycoprotein</keyword>
<keyword id="KW-0947">Limb-girdle muscular dystrophy</keyword>
<keyword id="KW-0472">Membrane</keyword>
<keyword id="KW-0547">Nucleotide-binding</keyword>
<keyword id="KW-1185">Reference proteome</keyword>
<keyword id="KW-0812">Transmembrane</keyword>
<keyword id="KW-1133">Transmembrane helix</keyword>
<comment type="function">
    <text evidence="1 3 4">May play a role in the maintenance of heart function mediated, at least in part, through cAMP-binding. May play a role in the regulation of KCNK2/TREK-1-mediated current amplitude (PubMed:31610034).</text>
</comment>
<comment type="interaction">
    <interactant intactId="EBI-21882666">
        <id>Q9HBV1</id>
    </interactant>
    <interactant intactId="EBI-2690712">
        <id>Q12765</id>
        <label>SCRN1</label>
    </interactant>
    <organismsDiffer>false</organismsDiffer>
    <experiments>2</experiments>
</comment>
<comment type="subcellular location">
    <subcellularLocation>
        <location evidence="5">Membrane</location>
        <topology evidence="5">Multi-pass membrane protein</topology>
    </subcellularLocation>
</comment>
<comment type="tissue specificity">
    <text evidence="3 4">Expressed predominantly in skeletal muscle (at protein level) (PubMed:10882522, PubMed:31610034). Also detected in heart (PubMed:10882522).</text>
</comment>
<comment type="disease" evidence="4">
    <disease id="DI-05816">
        <name>Muscular dystrophy, limb-girdle, autosomal recessive 26</name>
        <acronym>LGMDR26</acronym>
        <description>An autosomal recessive muscular disorder characterized by adult onset of weakness and atrophy of proximal limb muscles, elevated serum creatine kinase levels, and dystrophic findings on muscle biopsy. There is no cardiac or respiratory involvement.</description>
        <dbReference type="MIM" id="618848"/>
    </disease>
    <text>The disease is caused by variants affecting the gene represented in this entry.</text>
</comment>
<comment type="similarity">
    <text evidence="5">Belongs to the popeye family.</text>
</comment>
<protein>
    <recommendedName>
        <fullName>Popeye domain-containing protein 3</fullName>
        <shortName>Popeye protein 3</shortName>
    </recommendedName>
</protein>
<gene>
    <name type="primary">POPDC3</name>
    <name type="synonym">POP3</name>
</gene>
<evidence type="ECO:0000250" key="1">
    <source>
        <dbReference type="UniProtKB" id="Q9ES81"/>
    </source>
</evidence>
<evidence type="ECO:0000255" key="2"/>
<evidence type="ECO:0000269" key="3">
    <source>
    </source>
</evidence>
<evidence type="ECO:0000269" key="4">
    <source>
    </source>
</evidence>
<evidence type="ECO:0000305" key="5"/>
<sequence>MERNSSLWKNLIDEHPVCTTWKQEAEGAIYHLASILFVVGFMGGSGFFGLLYVFSLLGLGFLCSAVWAWVDVCAADIFSWNFVLFVICFMQFVHIAYQVRSITFAREFQVLYSSLFQPLGISLPVFRTIALSSEVVTLEKEHCYAMQGKTSIDKLSLLVSGRIRVTVDGEFLHYIFPLQFLDSPEWDSLRPTEEGIFQVTLTAETDCRYVSWRRKKLYLLFAQHRYISRLFSVLIGSDIADKLYALNDRVYIGKRYHYDIRLPNFYQMSTPEIRRSPLTQHFQNSRRYCDK</sequence>
<feature type="chain" id="PRO_0000046795" description="Popeye domain-containing protein 3">
    <location>
        <begin position="1"/>
        <end position="291"/>
    </location>
</feature>
<feature type="transmembrane region" description="Helical" evidence="2">
    <location>
        <begin position="27"/>
        <end position="44"/>
    </location>
</feature>
<feature type="transmembrane region" description="Helical" evidence="2">
    <location>
        <begin position="48"/>
        <end position="70"/>
    </location>
</feature>
<feature type="transmembrane region" description="Helical" evidence="2">
    <location>
        <begin position="77"/>
        <end position="99"/>
    </location>
</feature>
<feature type="glycosylation site" description="N-linked (GlcNAc...) asparagine" evidence="2">
    <location>
        <position position="4"/>
    </location>
</feature>
<feature type="sequence variant" id="VAR_053602" description="In dbSNP:rs11961225.">
    <original>R</original>
    <variation>Q</variation>
    <location>
        <position position="106"/>
    </location>
</feature>
<feature type="sequence variant" id="VAR_084034" description="In LGMDR26; causes aberrant modulation of the mechano-gated potassium channel KCNK2, when tested in a heterologous system; dbSNP:rs1311819000." evidence="4">
    <original>L</original>
    <variation>H</variation>
    <location>
        <position position="155"/>
    </location>
</feature>
<feature type="sequence variant" id="VAR_084035" description="In LGMDR26; causes aberrant modulation of the mechano-gated potassium channel KCNK2, when tested in a heterologous system; dbSNP:rs1054547392." evidence="4">
    <original>L</original>
    <variation>F</variation>
    <location>
        <position position="217"/>
    </location>
</feature>
<feature type="sequence variant" id="VAR_084036" description="In LGMDR26; decreased protein expression in muscle; causes a slightly abnormal modulation of the mechano-gated potassium channel KCNK2, when tested in a heterologous system; dbSNP:rs1437210856." evidence="4">
    <original>R</original>
    <variation>Q</variation>
    <location>
        <position position="261"/>
    </location>
</feature>
<feature type="sequence conflict" description="In Ref. 1; AAG23404." evidence="5" ref="1">
    <original>F</original>
    <variation>S</variation>
    <location>
        <position position="176"/>
    </location>
</feature>
<dbReference type="EMBL" id="AF204171">
    <property type="protein sequence ID" value="AAG23404.1"/>
    <property type="molecule type" value="mRNA"/>
</dbReference>
<dbReference type="EMBL" id="AK314101">
    <property type="protein sequence ID" value="BAG36795.1"/>
    <property type="molecule type" value="mRNA"/>
</dbReference>
<dbReference type="EMBL" id="AL359709">
    <property type="status" value="NOT_ANNOTATED_CDS"/>
    <property type="molecule type" value="Genomic_DNA"/>
</dbReference>
<dbReference type="EMBL" id="AL356775">
    <property type="status" value="NOT_ANNOTATED_CDS"/>
    <property type="molecule type" value="Genomic_DNA"/>
</dbReference>
<dbReference type="EMBL" id="CH471051">
    <property type="protein sequence ID" value="EAW48427.1"/>
    <property type="molecule type" value="Genomic_DNA"/>
</dbReference>
<dbReference type="EMBL" id="BC022323">
    <property type="protein sequence ID" value="AAH22323.1"/>
    <property type="molecule type" value="mRNA"/>
</dbReference>
<dbReference type="CCDS" id="CCDS5052.1"/>
<dbReference type="RefSeq" id="NP_071756.2">
    <property type="nucleotide sequence ID" value="NM_022361.4"/>
</dbReference>
<dbReference type="RefSeq" id="XP_011534369.1">
    <property type="nucleotide sequence ID" value="XM_011536067.4"/>
</dbReference>
<dbReference type="RefSeq" id="XP_016866683.1">
    <property type="nucleotide sequence ID" value="XM_017011194.1"/>
</dbReference>
<dbReference type="RefSeq" id="XP_016866684.1">
    <property type="nucleotide sequence ID" value="XM_017011195.1"/>
</dbReference>
<dbReference type="RefSeq" id="XP_047275207.1">
    <property type="nucleotide sequence ID" value="XM_047419251.1"/>
</dbReference>
<dbReference type="RefSeq" id="XP_047275208.1">
    <property type="nucleotide sequence ID" value="XM_047419252.1"/>
</dbReference>
<dbReference type="RefSeq" id="XP_054212192.1">
    <property type="nucleotide sequence ID" value="XM_054356217.1"/>
</dbReference>
<dbReference type="RefSeq" id="XP_054212193.1">
    <property type="nucleotide sequence ID" value="XM_054356218.1"/>
</dbReference>
<dbReference type="RefSeq" id="XP_054212194.1">
    <property type="nucleotide sequence ID" value="XM_054356219.1"/>
</dbReference>
<dbReference type="RefSeq" id="XP_054212195.1">
    <property type="nucleotide sequence ID" value="XM_054356220.1"/>
</dbReference>
<dbReference type="RefSeq" id="XP_054212196.1">
    <property type="nucleotide sequence ID" value="XM_054356221.1"/>
</dbReference>
<dbReference type="SMR" id="Q9HBV1"/>
<dbReference type="BioGRID" id="122102">
    <property type="interactions" value="8"/>
</dbReference>
<dbReference type="FunCoup" id="Q9HBV1">
    <property type="interactions" value="609"/>
</dbReference>
<dbReference type="IntAct" id="Q9HBV1">
    <property type="interactions" value="1"/>
</dbReference>
<dbReference type="STRING" id="9606.ENSP00000254765"/>
<dbReference type="GlyCosmos" id="Q9HBV1">
    <property type="glycosylation" value="1 site, No reported glycans"/>
</dbReference>
<dbReference type="GlyGen" id="Q9HBV1">
    <property type="glycosylation" value="1 site"/>
</dbReference>
<dbReference type="PhosphoSitePlus" id="Q9HBV1"/>
<dbReference type="BioMuta" id="POPDC3"/>
<dbReference type="DMDM" id="38258245"/>
<dbReference type="MassIVE" id="Q9HBV1"/>
<dbReference type="PaxDb" id="9606-ENSP00000254765"/>
<dbReference type="PeptideAtlas" id="Q9HBV1"/>
<dbReference type="Antibodypedia" id="32110">
    <property type="antibodies" value="130 antibodies from 22 providers"/>
</dbReference>
<dbReference type="DNASU" id="64208"/>
<dbReference type="Ensembl" id="ENST00000254765.4">
    <property type="protein sequence ID" value="ENSP00000254765.3"/>
    <property type="gene ID" value="ENSG00000132429.10"/>
</dbReference>
<dbReference type="GeneID" id="64208"/>
<dbReference type="KEGG" id="hsa:64208"/>
<dbReference type="MANE-Select" id="ENST00000254765.4">
    <property type="protein sequence ID" value="ENSP00000254765.3"/>
    <property type="RefSeq nucleotide sequence ID" value="NM_022361.5"/>
    <property type="RefSeq protein sequence ID" value="NP_071756.2"/>
</dbReference>
<dbReference type="UCSC" id="uc003prb.4">
    <property type="organism name" value="human"/>
</dbReference>
<dbReference type="AGR" id="HGNC:17649"/>
<dbReference type="CTD" id="64208"/>
<dbReference type="DisGeNET" id="64208"/>
<dbReference type="GeneCards" id="POPDC3"/>
<dbReference type="HGNC" id="HGNC:17649">
    <property type="gene designation" value="POPDC3"/>
</dbReference>
<dbReference type="HPA" id="ENSG00000132429">
    <property type="expression patterns" value="Tissue enhanced (heart muscle, skeletal muscle, tongue)"/>
</dbReference>
<dbReference type="MalaCards" id="POPDC3"/>
<dbReference type="MIM" id="605824">
    <property type="type" value="gene"/>
</dbReference>
<dbReference type="MIM" id="618848">
    <property type="type" value="phenotype"/>
</dbReference>
<dbReference type="neXtProt" id="NX_Q9HBV1"/>
<dbReference type="OpenTargets" id="ENSG00000132429"/>
<dbReference type="PharmGKB" id="PA134935151"/>
<dbReference type="VEuPathDB" id="HostDB:ENSG00000132429"/>
<dbReference type="eggNOG" id="ENOG502QWBZ">
    <property type="taxonomic scope" value="Eukaryota"/>
</dbReference>
<dbReference type="GeneTree" id="ENSGT00390000002563"/>
<dbReference type="HOGENOM" id="CLU_048494_2_1_1"/>
<dbReference type="InParanoid" id="Q9HBV1"/>
<dbReference type="OMA" id="TSWKQEA"/>
<dbReference type="OrthoDB" id="425611at2759"/>
<dbReference type="PAN-GO" id="Q9HBV1">
    <property type="GO annotations" value="6 GO annotations based on evolutionary models"/>
</dbReference>
<dbReference type="PhylomeDB" id="Q9HBV1"/>
<dbReference type="TreeFam" id="TF326644"/>
<dbReference type="PathwayCommons" id="Q9HBV1"/>
<dbReference type="SignaLink" id="Q9HBV1"/>
<dbReference type="BioGRID-ORCS" id="64208">
    <property type="hits" value="10 hits in 1151 CRISPR screens"/>
</dbReference>
<dbReference type="GeneWiki" id="POPDC3"/>
<dbReference type="GenomeRNAi" id="64208"/>
<dbReference type="Pharos" id="Q9HBV1">
    <property type="development level" value="Tbio"/>
</dbReference>
<dbReference type="PRO" id="PR:Q9HBV1"/>
<dbReference type="Proteomes" id="UP000005640">
    <property type="component" value="Chromosome 6"/>
</dbReference>
<dbReference type="RNAct" id="Q9HBV1">
    <property type="molecule type" value="protein"/>
</dbReference>
<dbReference type="Bgee" id="ENSG00000132429">
    <property type="expression patterns" value="Expressed in skeletal muscle tissue of rectus abdominis and 150 other cell types or tissues"/>
</dbReference>
<dbReference type="ExpressionAtlas" id="Q9HBV1">
    <property type="expression patterns" value="baseline and differential"/>
</dbReference>
<dbReference type="GO" id="GO:0016020">
    <property type="term" value="C:membrane"/>
    <property type="evidence" value="ECO:0000303"/>
    <property type="project" value="UniProtKB"/>
</dbReference>
<dbReference type="GO" id="GO:0042383">
    <property type="term" value="C:sarcolemma"/>
    <property type="evidence" value="ECO:0000318"/>
    <property type="project" value="GO_Central"/>
</dbReference>
<dbReference type="GO" id="GO:0030552">
    <property type="term" value="F:cAMP binding"/>
    <property type="evidence" value="ECO:0000250"/>
    <property type="project" value="UniProtKB"/>
</dbReference>
<dbReference type="GO" id="GO:0007507">
    <property type="term" value="P:heart development"/>
    <property type="evidence" value="ECO:0000318"/>
    <property type="project" value="GO_Central"/>
</dbReference>
<dbReference type="GO" id="GO:0042391">
    <property type="term" value="P:regulation of membrane potential"/>
    <property type="evidence" value="ECO:0000250"/>
    <property type="project" value="UniProtKB"/>
</dbReference>
<dbReference type="GO" id="GO:0007519">
    <property type="term" value="P:skeletal muscle tissue development"/>
    <property type="evidence" value="ECO:0000318"/>
    <property type="project" value="GO_Central"/>
</dbReference>
<dbReference type="GO" id="GO:0051146">
    <property type="term" value="P:striated muscle cell differentiation"/>
    <property type="evidence" value="ECO:0000318"/>
    <property type="project" value="GO_Central"/>
</dbReference>
<dbReference type="InterPro" id="IPR018490">
    <property type="entry name" value="cNMP-bd_dom_sf"/>
</dbReference>
<dbReference type="InterPro" id="IPR006916">
    <property type="entry name" value="POPDC1-3"/>
</dbReference>
<dbReference type="InterPro" id="IPR055272">
    <property type="entry name" value="POPDC1-3_dom"/>
</dbReference>
<dbReference type="PANTHER" id="PTHR12101">
    <property type="entry name" value="POPEYE DOMAIN CONTAINING PROTEIN"/>
    <property type="match status" value="1"/>
</dbReference>
<dbReference type="PANTHER" id="PTHR12101:SF18">
    <property type="entry name" value="POPEYE DOMAIN-CONTAINING PROTEIN 3"/>
    <property type="match status" value="1"/>
</dbReference>
<dbReference type="Pfam" id="PF04831">
    <property type="entry name" value="POPDC1-3"/>
    <property type="match status" value="1"/>
</dbReference>
<dbReference type="SUPFAM" id="SSF51206">
    <property type="entry name" value="cAMP-binding domain-like"/>
    <property type="match status" value="1"/>
</dbReference>
<name>POPD3_HUMAN</name>
<accession>Q9HBV1</accession>
<accession>B2RA98</accession>
<accession>Q5T3Y8</accession>
<accession>Q8TBW6</accession>